<protein>
    <recommendedName>
        <fullName evidence="1">4-hydroxy-tetrahydrodipicolinate synthase</fullName>
        <shortName evidence="1">HTPA synthase</shortName>
        <ecNumber evidence="1">4.3.3.7</ecNumber>
    </recommendedName>
</protein>
<accession>P63947</accession>
<accession>Q99U89</accession>
<gene>
    <name evidence="1" type="primary">dapA</name>
    <name type="ordered locus">SAV1395</name>
</gene>
<feature type="chain" id="PRO_0000103155" description="4-hydroxy-tetrahydrodipicolinate synthase">
    <location>
        <begin position="1"/>
        <end position="295"/>
    </location>
</feature>
<feature type="active site" description="Proton donor/acceptor" evidence="1">
    <location>
        <position position="135"/>
    </location>
</feature>
<feature type="active site" description="Schiff-base intermediate with substrate" evidence="1">
    <location>
        <position position="163"/>
    </location>
</feature>
<feature type="binding site" evidence="1">
    <location>
        <position position="47"/>
    </location>
    <ligand>
        <name>pyruvate</name>
        <dbReference type="ChEBI" id="CHEBI:15361"/>
    </ligand>
</feature>
<feature type="binding site" evidence="1">
    <location>
        <position position="206"/>
    </location>
    <ligand>
        <name>pyruvate</name>
        <dbReference type="ChEBI" id="CHEBI:15361"/>
    </ligand>
</feature>
<feature type="site" description="Part of a proton relay during catalysis" evidence="1">
    <location>
        <position position="46"/>
    </location>
</feature>
<feature type="site" description="Part of a proton relay during catalysis" evidence="1">
    <location>
        <position position="109"/>
    </location>
</feature>
<organism>
    <name type="scientific">Staphylococcus aureus (strain Mu50 / ATCC 700699)</name>
    <dbReference type="NCBI Taxonomy" id="158878"/>
    <lineage>
        <taxon>Bacteria</taxon>
        <taxon>Bacillati</taxon>
        <taxon>Bacillota</taxon>
        <taxon>Bacilli</taxon>
        <taxon>Bacillales</taxon>
        <taxon>Staphylococcaceae</taxon>
        <taxon>Staphylococcus</taxon>
    </lineage>
</organism>
<keyword id="KW-0028">Amino-acid biosynthesis</keyword>
<keyword id="KW-0963">Cytoplasm</keyword>
<keyword id="KW-0220">Diaminopimelate biosynthesis</keyword>
<keyword id="KW-0456">Lyase</keyword>
<keyword id="KW-0457">Lysine biosynthesis</keyword>
<keyword id="KW-0704">Schiff base</keyword>
<reference key="1">
    <citation type="journal article" date="2001" name="Lancet">
        <title>Whole genome sequencing of meticillin-resistant Staphylococcus aureus.</title>
        <authorList>
            <person name="Kuroda M."/>
            <person name="Ohta T."/>
            <person name="Uchiyama I."/>
            <person name="Baba T."/>
            <person name="Yuzawa H."/>
            <person name="Kobayashi I."/>
            <person name="Cui L."/>
            <person name="Oguchi A."/>
            <person name="Aoki K."/>
            <person name="Nagai Y."/>
            <person name="Lian J.-Q."/>
            <person name="Ito T."/>
            <person name="Kanamori M."/>
            <person name="Matsumaru H."/>
            <person name="Maruyama A."/>
            <person name="Murakami H."/>
            <person name="Hosoyama A."/>
            <person name="Mizutani-Ui Y."/>
            <person name="Takahashi N.K."/>
            <person name="Sawano T."/>
            <person name="Inoue R."/>
            <person name="Kaito C."/>
            <person name="Sekimizu K."/>
            <person name="Hirakawa H."/>
            <person name="Kuhara S."/>
            <person name="Goto S."/>
            <person name="Yabuzaki J."/>
            <person name="Kanehisa M."/>
            <person name="Yamashita A."/>
            <person name="Oshima K."/>
            <person name="Furuya K."/>
            <person name="Yoshino C."/>
            <person name="Shiba T."/>
            <person name="Hattori M."/>
            <person name="Ogasawara N."/>
            <person name="Hayashi H."/>
            <person name="Hiramatsu K."/>
        </authorList>
    </citation>
    <scope>NUCLEOTIDE SEQUENCE [LARGE SCALE GENOMIC DNA]</scope>
    <source>
        <strain>Mu50 / ATCC 700699</strain>
    </source>
</reference>
<dbReference type="EC" id="4.3.3.7" evidence="1"/>
<dbReference type="EMBL" id="BA000017">
    <property type="protein sequence ID" value="BAB57557.1"/>
    <property type="molecule type" value="Genomic_DNA"/>
</dbReference>
<dbReference type="RefSeq" id="WP_000149278.1">
    <property type="nucleotide sequence ID" value="NC_002758.2"/>
</dbReference>
<dbReference type="SMR" id="P63947"/>
<dbReference type="KEGG" id="sav:SAV1395"/>
<dbReference type="HOGENOM" id="CLU_049343_7_0_9"/>
<dbReference type="PhylomeDB" id="P63947"/>
<dbReference type="UniPathway" id="UPA00034">
    <property type="reaction ID" value="UER00017"/>
</dbReference>
<dbReference type="Proteomes" id="UP000002481">
    <property type="component" value="Chromosome"/>
</dbReference>
<dbReference type="GO" id="GO:0005829">
    <property type="term" value="C:cytosol"/>
    <property type="evidence" value="ECO:0007669"/>
    <property type="project" value="TreeGrafter"/>
</dbReference>
<dbReference type="GO" id="GO:0008840">
    <property type="term" value="F:4-hydroxy-tetrahydrodipicolinate synthase activity"/>
    <property type="evidence" value="ECO:0007669"/>
    <property type="project" value="UniProtKB-UniRule"/>
</dbReference>
<dbReference type="GO" id="GO:0019877">
    <property type="term" value="P:diaminopimelate biosynthetic process"/>
    <property type="evidence" value="ECO:0007669"/>
    <property type="project" value="UniProtKB-UniRule"/>
</dbReference>
<dbReference type="GO" id="GO:0009089">
    <property type="term" value="P:lysine biosynthetic process via diaminopimelate"/>
    <property type="evidence" value="ECO:0007669"/>
    <property type="project" value="UniProtKB-UniRule"/>
</dbReference>
<dbReference type="CDD" id="cd00950">
    <property type="entry name" value="DHDPS"/>
    <property type="match status" value="1"/>
</dbReference>
<dbReference type="Gene3D" id="3.20.20.70">
    <property type="entry name" value="Aldolase class I"/>
    <property type="match status" value="1"/>
</dbReference>
<dbReference type="HAMAP" id="MF_00418">
    <property type="entry name" value="DapA"/>
    <property type="match status" value="1"/>
</dbReference>
<dbReference type="InterPro" id="IPR013785">
    <property type="entry name" value="Aldolase_TIM"/>
</dbReference>
<dbReference type="InterPro" id="IPR005263">
    <property type="entry name" value="DapA"/>
</dbReference>
<dbReference type="InterPro" id="IPR002220">
    <property type="entry name" value="DapA-like"/>
</dbReference>
<dbReference type="InterPro" id="IPR020625">
    <property type="entry name" value="Schiff_base-form_aldolases_AS"/>
</dbReference>
<dbReference type="NCBIfam" id="TIGR00674">
    <property type="entry name" value="dapA"/>
    <property type="match status" value="1"/>
</dbReference>
<dbReference type="PANTHER" id="PTHR12128:SF66">
    <property type="entry name" value="4-HYDROXY-2-OXOGLUTARATE ALDOLASE, MITOCHONDRIAL"/>
    <property type="match status" value="1"/>
</dbReference>
<dbReference type="PANTHER" id="PTHR12128">
    <property type="entry name" value="DIHYDRODIPICOLINATE SYNTHASE"/>
    <property type="match status" value="1"/>
</dbReference>
<dbReference type="Pfam" id="PF00701">
    <property type="entry name" value="DHDPS"/>
    <property type="match status" value="1"/>
</dbReference>
<dbReference type="PIRSF" id="PIRSF001365">
    <property type="entry name" value="DHDPS"/>
    <property type="match status" value="1"/>
</dbReference>
<dbReference type="PRINTS" id="PR00146">
    <property type="entry name" value="DHPICSNTHASE"/>
</dbReference>
<dbReference type="SMART" id="SM01130">
    <property type="entry name" value="DHDPS"/>
    <property type="match status" value="1"/>
</dbReference>
<dbReference type="SUPFAM" id="SSF51569">
    <property type="entry name" value="Aldolase"/>
    <property type="match status" value="1"/>
</dbReference>
<dbReference type="PROSITE" id="PS00666">
    <property type="entry name" value="DHDPS_2"/>
    <property type="match status" value="1"/>
</dbReference>
<evidence type="ECO:0000255" key="1">
    <source>
        <dbReference type="HAMAP-Rule" id="MF_00418"/>
    </source>
</evidence>
<evidence type="ECO:0000305" key="2"/>
<proteinExistence type="inferred from homology"/>
<sequence>MTHLFEGVGVALTTPFTNNKVNLEALKAHVNFLLENNAQAIIVNGTTAESPTLTTDEKERILKTVIDLVDKRVPVIAGTGTNDTEKSIQASFQAKALGADAIMLITPYYNKTNQRGLVKHFEAITDAVKLPVVLYNVPSRTNMTIEPETVEILSQHPYIVALKDATNDFEYLEEVKKRIDTNSFALYSGNDDNVVEYYQRGGQGVISVIANVIPKEFQALYDAQQSGLDIQDQFKPIGTLLSALSVDINPIPIKALTSYLEFGNYELRLPLVSLEDTDTKVLREAYDTFKAGENE</sequence>
<name>DAPA_STAAM</name>
<comment type="function">
    <text evidence="1">Catalyzes the condensation of (S)-aspartate-beta-semialdehyde [(S)-ASA] and pyruvate to 4-hydroxy-tetrahydrodipicolinate (HTPA).</text>
</comment>
<comment type="catalytic activity">
    <reaction evidence="1">
        <text>L-aspartate 4-semialdehyde + pyruvate = (2S,4S)-4-hydroxy-2,3,4,5-tetrahydrodipicolinate + H2O + H(+)</text>
        <dbReference type="Rhea" id="RHEA:34171"/>
        <dbReference type="ChEBI" id="CHEBI:15361"/>
        <dbReference type="ChEBI" id="CHEBI:15377"/>
        <dbReference type="ChEBI" id="CHEBI:15378"/>
        <dbReference type="ChEBI" id="CHEBI:67139"/>
        <dbReference type="ChEBI" id="CHEBI:537519"/>
        <dbReference type="EC" id="4.3.3.7"/>
    </reaction>
</comment>
<comment type="pathway">
    <text evidence="1">Amino-acid biosynthesis; L-lysine biosynthesis via DAP pathway; (S)-tetrahydrodipicolinate from L-aspartate: step 3/4.</text>
</comment>
<comment type="subunit">
    <text evidence="1">Homodimer.</text>
</comment>
<comment type="subcellular location">
    <subcellularLocation>
        <location evidence="1">Cytoplasm</location>
    </subcellularLocation>
</comment>
<comment type="similarity">
    <text evidence="1">Belongs to the DapA family.</text>
</comment>
<comment type="caution">
    <text evidence="2">Was originally thought to be a dihydrodipicolinate synthase (DHDPS), catalyzing the condensation of (S)-aspartate-beta-semialdehyde [(S)-ASA] and pyruvate to dihydrodipicolinate (DHDP). However, it was shown in E.coli that the product of the enzymatic reaction is not dihydrodipicolinate but in fact (4S)-4-hydroxy-2,3,4,5-tetrahydro-(2S)-dipicolinic acid (HTPA), and that the consecutive dehydration reaction leading to DHDP is not spontaneous but catalyzed by DapB.</text>
</comment>